<keyword id="KW-0028">Amino-acid biosynthesis</keyword>
<keyword id="KW-0963">Cytoplasm</keyword>
<keyword id="KW-0368">Histidine biosynthesis</keyword>
<keyword id="KW-0456">Lyase</keyword>
<keyword id="KW-1185">Reference proteome</keyword>
<name>HIS6_ROSDO</name>
<gene>
    <name evidence="1" type="primary">hisF</name>
    <name type="ordered locus">RD1_3561</name>
</gene>
<reference key="1">
    <citation type="journal article" date="2007" name="J. Bacteriol.">
        <title>The complete genome sequence of Roseobacter denitrificans reveals a mixotrophic rather than photosynthetic metabolism.</title>
        <authorList>
            <person name="Swingley W.D."/>
            <person name="Sadekar S."/>
            <person name="Mastrian S.D."/>
            <person name="Matthies H.J."/>
            <person name="Hao J."/>
            <person name="Ramos H."/>
            <person name="Acharya C.R."/>
            <person name="Conrad A.L."/>
            <person name="Taylor H.L."/>
            <person name="Dejesa L.C."/>
            <person name="Shah M.K."/>
            <person name="O'Huallachain M.E."/>
            <person name="Lince M.T."/>
            <person name="Blankenship R.E."/>
            <person name="Beatty J.T."/>
            <person name="Touchman J.W."/>
        </authorList>
    </citation>
    <scope>NUCLEOTIDE SEQUENCE [LARGE SCALE GENOMIC DNA]</scope>
    <source>
        <strain>ATCC 33942 / OCh 114</strain>
    </source>
</reference>
<sequence>MLKTRIIPCLDVADGRVVKGVNFVDLRDAGDPVDAAIAYDAAGADELCFLDITATHENRATMFDVVTRTAEHCYIPLTVGGGVRSVSDVRALLLAGADKVSFNSAAVANPDVVAQAADQFGSQCIVVAIDAKTTSPGKWEIFTHGGRKPTGIDAVAFAQTVTAKGAGEILLTSMDRDGTRAGFNLPLTRAISDAVNVPVIASGGVGTLDHLVEGVTKGGASAVLAASIFHFGDYTIAQAKQHMSDAGIPMRLI</sequence>
<dbReference type="EC" id="4.3.2.10" evidence="1"/>
<dbReference type="EMBL" id="CP000362">
    <property type="protein sequence ID" value="ABG33042.1"/>
    <property type="molecule type" value="Genomic_DNA"/>
</dbReference>
<dbReference type="RefSeq" id="WP_011569655.1">
    <property type="nucleotide sequence ID" value="NC_008209.1"/>
</dbReference>
<dbReference type="SMR" id="Q162Q1"/>
<dbReference type="STRING" id="375451.RD1_3561"/>
<dbReference type="KEGG" id="rde:RD1_3561"/>
<dbReference type="eggNOG" id="COG0107">
    <property type="taxonomic scope" value="Bacteria"/>
</dbReference>
<dbReference type="HOGENOM" id="CLU_048577_4_0_5"/>
<dbReference type="OrthoDB" id="9781903at2"/>
<dbReference type="UniPathway" id="UPA00031">
    <property type="reaction ID" value="UER00010"/>
</dbReference>
<dbReference type="Proteomes" id="UP000007029">
    <property type="component" value="Chromosome"/>
</dbReference>
<dbReference type="GO" id="GO:0005737">
    <property type="term" value="C:cytoplasm"/>
    <property type="evidence" value="ECO:0007669"/>
    <property type="project" value="UniProtKB-SubCell"/>
</dbReference>
<dbReference type="GO" id="GO:0000107">
    <property type="term" value="F:imidazoleglycerol-phosphate synthase activity"/>
    <property type="evidence" value="ECO:0007669"/>
    <property type="project" value="UniProtKB-UniRule"/>
</dbReference>
<dbReference type="GO" id="GO:0016829">
    <property type="term" value="F:lyase activity"/>
    <property type="evidence" value="ECO:0007669"/>
    <property type="project" value="UniProtKB-KW"/>
</dbReference>
<dbReference type="GO" id="GO:0000105">
    <property type="term" value="P:L-histidine biosynthetic process"/>
    <property type="evidence" value="ECO:0007669"/>
    <property type="project" value="UniProtKB-UniRule"/>
</dbReference>
<dbReference type="CDD" id="cd04731">
    <property type="entry name" value="HisF"/>
    <property type="match status" value="1"/>
</dbReference>
<dbReference type="FunFam" id="3.20.20.70:FF:000006">
    <property type="entry name" value="Imidazole glycerol phosphate synthase subunit HisF"/>
    <property type="match status" value="1"/>
</dbReference>
<dbReference type="Gene3D" id="3.20.20.70">
    <property type="entry name" value="Aldolase class I"/>
    <property type="match status" value="1"/>
</dbReference>
<dbReference type="HAMAP" id="MF_01013">
    <property type="entry name" value="HisF"/>
    <property type="match status" value="1"/>
</dbReference>
<dbReference type="InterPro" id="IPR013785">
    <property type="entry name" value="Aldolase_TIM"/>
</dbReference>
<dbReference type="InterPro" id="IPR006062">
    <property type="entry name" value="His_biosynth"/>
</dbReference>
<dbReference type="InterPro" id="IPR004651">
    <property type="entry name" value="HisF"/>
</dbReference>
<dbReference type="InterPro" id="IPR050064">
    <property type="entry name" value="IGPS_HisA/HisF"/>
</dbReference>
<dbReference type="InterPro" id="IPR011060">
    <property type="entry name" value="RibuloseP-bd_barrel"/>
</dbReference>
<dbReference type="NCBIfam" id="TIGR00735">
    <property type="entry name" value="hisF"/>
    <property type="match status" value="1"/>
</dbReference>
<dbReference type="PANTHER" id="PTHR21235:SF2">
    <property type="entry name" value="IMIDAZOLE GLYCEROL PHOSPHATE SYNTHASE HISHF"/>
    <property type="match status" value="1"/>
</dbReference>
<dbReference type="PANTHER" id="PTHR21235">
    <property type="entry name" value="IMIDAZOLE GLYCEROL PHOSPHATE SYNTHASE SUBUNIT HISF/H IGP SYNTHASE SUBUNIT HISF/H"/>
    <property type="match status" value="1"/>
</dbReference>
<dbReference type="Pfam" id="PF00977">
    <property type="entry name" value="His_biosynth"/>
    <property type="match status" value="1"/>
</dbReference>
<dbReference type="SUPFAM" id="SSF51366">
    <property type="entry name" value="Ribulose-phoshate binding barrel"/>
    <property type="match status" value="1"/>
</dbReference>
<organism>
    <name type="scientific">Roseobacter denitrificans (strain ATCC 33942 / OCh 114)</name>
    <name type="common">Erythrobacter sp. (strain OCh 114)</name>
    <name type="synonym">Roseobacter denitrificans</name>
    <dbReference type="NCBI Taxonomy" id="375451"/>
    <lineage>
        <taxon>Bacteria</taxon>
        <taxon>Pseudomonadati</taxon>
        <taxon>Pseudomonadota</taxon>
        <taxon>Alphaproteobacteria</taxon>
        <taxon>Rhodobacterales</taxon>
        <taxon>Roseobacteraceae</taxon>
        <taxon>Roseobacter</taxon>
    </lineage>
</organism>
<evidence type="ECO:0000255" key="1">
    <source>
        <dbReference type="HAMAP-Rule" id="MF_01013"/>
    </source>
</evidence>
<protein>
    <recommendedName>
        <fullName evidence="1">Imidazole glycerol phosphate synthase subunit HisF</fullName>
        <ecNumber evidence="1">4.3.2.10</ecNumber>
    </recommendedName>
    <alternativeName>
        <fullName evidence="1">IGP synthase cyclase subunit</fullName>
    </alternativeName>
    <alternativeName>
        <fullName evidence="1">IGP synthase subunit HisF</fullName>
    </alternativeName>
    <alternativeName>
        <fullName evidence="1">ImGP synthase subunit HisF</fullName>
        <shortName evidence="1">IGPS subunit HisF</shortName>
    </alternativeName>
</protein>
<proteinExistence type="inferred from homology"/>
<accession>Q162Q1</accession>
<feature type="chain" id="PRO_1000063135" description="Imidazole glycerol phosphate synthase subunit HisF">
    <location>
        <begin position="1"/>
        <end position="253"/>
    </location>
</feature>
<feature type="active site" evidence="1">
    <location>
        <position position="11"/>
    </location>
</feature>
<feature type="active site" evidence="1">
    <location>
        <position position="130"/>
    </location>
</feature>
<comment type="function">
    <text evidence="1">IGPS catalyzes the conversion of PRFAR and glutamine to IGP, AICAR and glutamate. The HisF subunit catalyzes the cyclization activity that produces IGP and AICAR from PRFAR using the ammonia provided by the HisH subunit.</text>
</comment>
<comment type="catalytic activity">
    <reaction evidence="1">
        <text>5-[(5-phospho-1-deoxy-D-ribulos-1-ylimino)methylamino]-1-(5-phospho-beta-D-ribosyl)imidazole-4-carboxamide + L-glutamine = D-erythro-1-(imidazol-4-yl)glycerol 3-phosphate + 5-amino-1-(5-phospho-beta-D-ribosyl)imidazole-4-carboxamide + L-glutamate + H(+)</text>
        <dbReference type="Rhea" id="RHEA:24793"/>
        <dbReference type="ChEBI" id="CHEBI:15378"/>
        <dbReference type="ChEBI" id="CHEBI:29985"/>
        <dbReference type="ChEBI" id="CHEBI:58278"/>
        <dbReference type="ChEBI" id="CHEBI:58359"/>
        <dbReference type="ChEBI" id="CHEBI:58475"/>
        <dbReference type="ChEBI" id="CHEBI:58525"/>
        <dbReference type="EC" id="4.3.2.10"/>
    </reaction>
</comment>
<comment type="pathway">
    <text evidence="1">Amino-acid biosynthesis; L-histidine biosynthesis; L-histidine from 5-phospho-alpha-D-ribose 1-diphosphate: step 5/9.</text>
</comment>
<comment type="subunit">
    <text evidence="1">Heterodimer of HisH and HisF.</text>
</comment>
<comment type="subcellular location">
    <subcellularLocation>
        <location evidence="1">Cytoplasm</location>
    </subcellularLocation>
</comment>
<comment type="similarity">
    <text evidence="1">Belongs to the HisA/HisF family.</text>
</comment>